<protein>
    <recommendedName>
        <fullName evidence="2">Adenylosuccinate synthetase</fullName>
        <shortName evidence="2">AMPSase</shortName>
        <shortName evidence="2">AdSS</shortName>
        <ecNumber evidence="2">6.3.4.4</ecNumber>
    </recommendedName>
    <alternativeName>
        <fullName evidence="2">IMP--aspartate ligase</fullName>
    </alternativeName>
</protein>
<feature type="chain" id="PRO_0000399365" description="Adenylosuccinate synthetase">
    <location>
        <begin position="1"/>
        <end position="430"/>
    </location>
</feature>
<feature type="active site" description="Proton acceptor" evidence="2">
    <location>
        <position position="12"/>
    </location>
</feature>
<feature type="active site" description="Proton donor" evidence="2">
    <location>
        <position position="40"/>
    </location>
</feature>
<feature type="binding site" evidence="2">
    <location>
        <begin position="11"/>
        <end position="17"/>
    </location>
    <ligand>
        <name>GTP</name>
        <dbReference type="ChEBI" id="CHEBI:37565"/>
    </ligand>
</feature>
<feature type="binding site" description="in other chain" evidence="2">
    <location>
        <begin position="12"/>
        <end position="15"/>
    </location>
    <ligand>
        <name>IMP</name>
        <dbReference type="ChEBI" id="CHEBI:58053"/>
        <note>ligand shared between dimeric partners</note>
    </ligand>
</feature>
<feature type="binding site" evidence="2">
    <location>
        <position position="12"/>
    </location>
    <ligand>
        <name>Mg(2+)</name>
        <dbReference type="ChEBI" id="CHEBI:18420"/>
    </ligand>
</feature>
<feature type="binding site" description="in other chain" evidence="2">
    <location>
        <begin position="37"/>
        <end position="40"/>
    </location>
    <ligand>
        <name>IMP</name>
        <dbReference type="ChEBI" id="CHEBI:58053"/>
        <note>ligand shared between dimeric partners</note>
    </ligand>
</feature>
<feature type="binding site" evidence="2">
    <location>
        <begin position="39"/>
        <end position="41"/>
    </location>
    <ligand>
        <name>GTP</name>
        <dbReference type="ChEBI" id="CHEBI:37565"/>
    </ligand>
</feature>
<feature type="binding site" evidence="2">
    <location>
        <position position="39"/>
    </location>
    <ligand>
        <name>Mg(2+)</name>
        <dbReference type="ChEBI" id="CHEBI:18420"/>
    </ligand>
</feature>
<feature type="binding site" description="in other chain" evidence="2">
    <location>
        <position position="129"/>
    </location>
    <ligand>
        <name>IMP</name>
        <dbReference type="ChEBI" id="CHEBI:58053"/>
        <note>ligand shared between dimeric partners</note>
    </ligand>
</feature>
<feature type="binding site" evidence="2">
    <location>
        <position position="143"/>
    </location>
    <ligand>
        <name>IMP</name>
        <dbReference type="ChEBI" id="CHEBI:58053"/>
        <note>ligand shared between dimeric partners</note>
    </ligand>
</feature>
<feature type="binding site" description="in other chain" evidence="2">
    <location>
        <position position="221"/>
    </location>
    <ligand>
        <name>IMP</name>
        <dbReference type="ChEBI" id="CHEBI:58053"/>
        <note>ligand shared between dimeric partners</note>
    </ligand>
</feature>
<feature type="binding site" description="in other chain" evidence="2">
    <location>
        <position position="236"/>
    </location>
    <ligand>
        <name>IMP</name>
        <dbReference type="ChEBI" id="CHEBI:58053"/>
        <note>ligand shared between dimeric partners</note>
    </ligand>
</feature>
<feature type="binding site" evidence="2">
    <location>
        <begin position="296"/>
        <end position="302"/>
    </location>
    <ligand>
        <name>substrate</name>
    </ligand>
</feature>
<feature type="binding site" description="in other chain" evidence="2">
    <location>
        <position position="300"/>
    </location>
    <ligand>
        <name>IMP</name>
        <dbReference type="ChEBI" id="CHEBI:58053"/>
        <note>ligand shared between dimeric partners</note>
    </ligand>
</feature>
<feature type="binding site" evidence="2">
    <location>
        <position position="302"/>
    </location>
    <ligand>
        <name>GTP</name>
        <dbReference type="ChEBI" id="CHEBI:37565"/>
    </ligand>
</feature>
<feature type="binding site" evidence="2">
    <location>
        <begin position="328"/>
        <end position="330"/>
    </location>
    <ligand>
        <name>GTP</name>
        <dbReference type="ChEBI" id="CHEBI:37565"/>
    </ligand>
</feature>
<feature type="binding site" evidence="2">
    <location>
        <begin position="412"/>
        <end position="414"/>
    </location>
    <ligand>
        <name>GTP</name>
        <dbReference type="ChEBI" id="CHEBI:37565"/>
    </ligand>
</feature>
<keyword id="KW-0963">Cytoplasm</keyword>
<keyword id="KW-0342">GTP-binding</keyword>
<keyword id="KW-0436">Ligase</keyword>
<keyword id="KW-0460">Magnesium</keyword>
<keyword id="KW-0479">Metal-binding</keyword>
<keyword id="KW-0547">Nucleotide-binding</keyword>
<keyword id="KW-0658">Purine biosynthesis</keyword>
<keyword id="KW-1185">Reference proteome</keyword>
<reference key="1">
    <citation type="journal article" date="2010" name="PLoS Genet.">
        <title>De novo assembly of a 40 Mb eukaryotic genome from short sequence reads: Sordaria macrospora, a model organism for fungal morphogenesis.</title>
        <authorList>
            <person name="Nowrousian M."/>
            <person name="Stajich J.E."/>
            <person name="Chu M."/>
            <person name="Engh I."/>
            <person name="Espagne E."/>
            <person name="Halliday K."/>
            <person name="Kamerewerd J."/>
            <person name="Kempken F."/>
            <person name="Knab B."/>
            <person name="Kuo H.-C."/>
            <person name="Osiewacz H.D."/>
            <person name="Poeggeler S."/>
            <person name="Read N.D."/>
            <person name="Seiler S."/>
            <person name="Smith K.M."/>
            <person name="Zickler D."/>
            <person name="Kueck U."/>
            <person name="Freitag M."/>
        </authorList>
    </citation>
    <scope>NUCLEOTIDE SEQUENCE [LARGE SCALE GENOMIC DNA]</scope>
    <source>
        <strain>ATCC MYA-333 / DSM 997 / K(L3346) / K-hell</strain>
    </source>
</reference>
<evidence type="ECO:0000250" key="1"/>
<evidence type="ECO:0000255" key="2">
    <source>
        <dbReference type="HAMAP-Rule" id="MF_03125"/>
    </source>
</evidence>
<dbReference type="EC" id="6.3.4.4" evidence="2"/>
<dbReference type="EMBL" id="CABT02000010">
    <property type="protein sequence ID" value="CCC09938.1"/>
    <property type="molecule type" value="Genomic_DNA"/>
</dbReference>
<dbReference type="RefSeq" id="XP_003345088.1">
    <property type="nucleotide sequence ID" value="XM_003345040.1"/>
</dbReference>
<dbReference type="SMR" id="D1ZRH0"/>
<dbReference type="FunCoup" id="D1ZRH0">
    <property type="interactions" value="764"/>
</dbReference>
<dbReference type="STRING" id="771870.D1ZRH0"/>
<dbReference type="GeneID" id="10802413"/>
<dbReference type="KEGG" id="smp:10802413"/>
<dbReference type="VEuPathDB" id="FungiDB:SMAC_09309"/>
<dbReference type="eggNOG" id="KOG1355">
    <property type="taxonomic scope" value="Eukaryota"/>
</dbReference>
<dbReference type="HOGENOM" id="CLU_029848_3_2_1"/>
<dbReference type="InParanoid" id="D1ZRH0"/>
<dbReference type="OMA" id="FHHAKPI"/>
<dbReference type="OrthoDB" id="10265645at2759"/>
<dbReference type="UniPathway" id="UPA00075">
    <property type="reaction ID" value="UER00335"/>
</dbReference>
<dbReference type="Proteomes" id="UP000001881">
    <property type="component" value="Unassembled WGS sequence"/>
</dbReference>
<dbReference type="GO" id="GO:0005737">
    <property type="term" value="C:cytoplasm"/>
    <property type="evidence" value="ECO:0007669"/>
    <property type="project" value="UniProtKB-SubCell"/>
</dbReference>
<dbReference type="GO" id="GO:0004019">
    <property type="term" value="F:adenylosuccinate synthase activity"/>
    <property type="evidence" value="ECO:0007669"/>
    <property type="project" value="UniProtKB-UniRule"/>
</dbReference>
<dbReference type="GO" id="GO:0016208">
    <property type="term" value="F:AMP binding"/>
    <property type="evidence" value="ECO:0007669"/>
    <property type="project" value="EnsemblFungi"/>
</dbReference>
<dbReference type="GO" id="GO:0019002">
    <property type="term" value="F:GMP binding"/>
    <property type="evidence" value="ECO:0007669"/>
    <property type="project" value="EnsemblFungi"/>
</dbReference>
<dbReference type="GO" id="GO:0005525">
    <property type="term" value="F:GTP binding"/>
    <property type="evidence" value="ECO:0007669"/>
    <property type="project" value="UniProtKB-UniRule"/>
</dbReference>
<dbReference type="GO" id="GO:0000287">
    <property type="term" value="F:magnesium ion binding"/>
    <property type="evidence" value="ECO:0007669"/>
    <property type="project" value="UniProtKB-UniRule"/>
</dbReference>
<dbReference type="GO" id="GO:0044208">
    <property type="term" value="P:'de novo' AMP biosynthetic process"/>
    <property type="evidence" value="ECO:0007669"/>
    <property type="project" value="UniProtKB-UniRule"/>
</dbReference>
<dbReference type="GO" id="GO:0071276">
    <property type="term" value="P:cellular response to cadmium ion"/>
    <property type="evidence" value="ECO:0007669"/>
    <property type="project" value="EnsemblFungi"/>
</dbReference>
<dbReference type="GO" id="GO:0046040">
    <property type="term" value="P:IMP metabolic process"/>
    <property type="evidence" value="ECO:0007669"/>
    <property type="project" value="TreeGrafter"/>
</dbReference>
<dbReference type="CDD" id="cd03108">
    <property type="entry name" value="AdSS"/>
    <property type="match status" value="1"/>
</dbReference>
<dbReference type="FunFam" id="1.10.300.10:FF:000001">
    <property type="entry name" value="Adenylosuccinate synthetase"/>
    <property type="match status" value="1"/>
</dbReference>
<dbReference type="FunFam" id="3.90.170.10:FF:000001">
    <property type="entry name" value="Adenylosuccinate synthetase"/>
    <property type="match status" value="1"/>
</dbReference>
<dbReference type="Gene3D" id="3.40.440.10">
    <property type="entry name" value="Adenylosuccinate Synthetase, subunit A, domain 1"/>
    <property type="match status" value="1"/>
</dbReference>
<dbReference type="Gene3D" id="1.10.300.10">
    <property type="entry name" value="Adenylosuccinate Synthetase, subunit A, domain 2"/>
    <property type="match status" value="1"/>
</dbReference>
<dbReference type="Gene3D" id="3.90.170.10">
    <property type="entry name" value="Adenylosuccinate Synthetase, subunit A, domain 3"/>
    <property type="match status" value="1"/>
</dbReference>
<dbReference type="HAMAP" id="MF_00011">
    <property type="entry name" value="Adenylosucc_synth"/>
    <property type="match status" value="1"/>
</dbReference>
<dbReference type="InterPro" id="IPR018220">
    <property type="entry name" value="Adenylosuccin_syn_GTP-bd"/>
</dbReference>
<dbReference type="InterPro" id="IPR033128">
    <property type="entry name" value="Adenylosuccin_syn_Lys_AS"/>
</dbReference>
<dbReference type="InterPro" id="IPR042109">
    <property type="entry name" value="Adenylosuccinate_synth_dom1"/>
</dbReference>
<dbReference type="InterPro" id="IPR042110">
    <property type="entry name" value="Adenylosuccinate_synth_dom2"/>
</dbReference>
<dbReference type="InterPro" id="IPR042111">
    <property type="entry name" value="Adenylosuccinate_synth_dom3"/>
</dbReference>
<dbReference type="InterPro" id="IPR001114">
    <property type="entry name" value="Adenylosuccinate_synthetase"/>
</dbReference>
<dbReference type="InterPro" id="IPR027417">
    <property type="entry name" value="P-loop_NTPase"/>
</dbReference>
<dbReference type="NCBIfam" id="NF002223">
    <property type="entry name" value="PRK01117.1"/>
    <property type="match status" value="1"/>
</dbReference>
<dbReference type="NCBIfam" id="TIGR00184">
    <property type="entry name" value="purA"/>
    <property type="match status" value="1"/>
</dbReference>
<dbReference type="PANTHER" id="PTHR11846">
    <property type="entry name" value="ADENYLOSUCCINATE SYNTHETASE"/>
    <property type="match status" value="1"/>
</dbReference>
<dbReference type="PANTHER" id="PTHR11846:SF0">
    <property type="entry name" value="ADENYLOSUCCINATE SYNTHETASE"/>
    <property type="match status" value="1"/>
</dbReference>
<dbReference type="Pfam" id="PF00709">
    <property type="entry name" value="Adenylsucc_synt"/>
    <property type="match status" value="1"/>
</dbReference>
<dbReference type="SMART" id="SM00788">
    <property type="entry name" value="Adenylsucc_synt"/>
    <property type="match status" value="1"/>
</dbReference>
<dbReference type="SUPFAM" id="SSF52540">
    <property type="entry name" value="P-loop containing nucleoside triphosphate hydrolases"/>
    <property type="match status" value="1"/>
</dbReference>
<dbReference type="PROSITE" id="PS01266">
    <property type="entry name" value="ADENYLOSUCCIN_SYN_1"/>
    <property type="match status" value="1"/>
</dbReference>
<dbReference type="PROSITE" id="PS00513">
    <property type="entry name" value="ADENYLOSUCCIN_SYN_2"/>
    <property type="match status" value="1"/>
</dbReference>
<sequence length="430" mass="47759">MATIILGSQWGDEGKGKLTDILCPKAQICARAAGGHNAGHSIVANGVEYDFHLLPSGLVNPNCMNLIGSSVVFHVPSFFSELSKLEEKGLTDVHNRILVSDRCHVDFDLHAAVDGLEEVELGDRKIGTTGRGIGPSYSTKMARSGVRIHEIFNEEIFERKLRQLANGYKKRFGDLLKYDVEEEIARFKEYRVKLAPYTVDAVQYMKQAQDRGYKILIEGANALMLDIDYGTYPYVTSSNTGLGGIITGLSINPTKIDNIIGVVKAYTTRVGGGPFKTEDLEEAGTKLQDIGREWGVSTGRKRRCGWLDLVVLKYSTAINNYTALNLTKLDILDTFETIKVAVAYKDPQTGEEVEYFPADLGILDSLEVVYKELPGWNKPITDCKTYYDLPKEARAYVEFIEEFVGVPICYIGTGPKREDMIVRKASAIKE</sequence>
<organism>
    <name type="scientific">Sordaria macrospora (strain ATCC MYA-333 / DSM 997 / K(L3346) / K-hell)</name>
    <dbReference type="NCBI Taxonomy" id="771870"/>
    <lineage>
        <taxon>Eukaryota</taxon>
        <taxon>Fungi</taxon>
        <taxon>Dikarya</taxon>
        <taxon>Ascomycota</taxon>
        <taxon>Pezizomycotina</taxon>
        <taxon>Sordariomycetes</taxon>
        <taxon>Sordariomycetidae</taxon>
        <taxon>Sordariales</taxon>
        <taxon>Sordariaceae</taxon>
        <taxon>Sordaria</taxon>
    </lineage>
</organism>
<name>PURA_SORMK</name>
<gene>
    <name type="ORF">SMAC_09309</name>
</gene>
<comment type="function">
    <text evidence="1">Plays an important role in the de novo pathway and in the salvage pathway of purine nucleotide biosynthesis. Catalyzes the first committed step in the biosynthesis of AMP from IMP (By similarity).</text>
</comment>
<comment type="catalytic activity">
    <reaction evidence="2">
        <text>IMP + L-aspartate + GTP = N(6)-(1,2-dicarboxyethyl)-AMP + GDP + phosphate + 2 H(+)</text>
        <dbReference type="Rhea" id="RHEA:15753"/>
        <dbReference type="ChEBI" id="CHEBI:15378"/>
        <dbReference type="ChEBI" id="CHEBI:29991"/>
        <dbReference type="ChEBI" id="CHEBI:37565"/>
        <dbReference type="ChEBI" id="CHEBI:43474"/>
        <dbReference type="ChEBI" id="CHEBI:57567"/>
        <dbReference type="ChEBI" id="CHEBI:58053"/>
        <dbReference type="ChEBI" id="CHEBI:58189"/>
        <dbReference type="EC" id="6.3.4.4"/>
    </reaction>
</comment>
<comment type="cofactor">
    <cofactor evidence="2">
        <name>Mg(2+)</name>
        <dbReference type="ChEBI" id="CHEBI:18420"/>
    </cofactor>
    <text evidence="2">Binds 1 Mg(2+) ion per subunit.</text>
</comment>
<comment type="pathway">
    <text evidence="2">Purine metabolism; AMP biosynthesis via de novo pathway; AMP from IMP: step 1/2.</text>
</comment>
<comment type="subunit">
    <text evidence="2">Homodimer.</text>
</comment>
<comment type="subcellular location">
    <subcellularLocation>
        <location evidence="2">Cytoplasm</location>
    </subcellularLocation>
</comment>
<comment type="similarity">
    <text evidence="2">Belongs to the adenylosuccinate synthetase family.</text>
</comment>
<proteinExistence type="inferred from homology"/>
<accession>D1ZRH0</accession>
<accession>F7VWB6</accession>